<dbReference type="EC" id="3.13.2.1"/>
<dbReference type="EMBL" id="X64391">
    <property type="status" value="NOT_ANNOTATED_CDS"/>
    <property type="molecule type" value="Genomic_DNA"/>
</dbReference>
<dbReference type="PIR" id="S22958">
    <property type="entry name" value="S22958"/>
</dbReference>
<dbReference type="SMR" id="P26799"/>
<dbReference type="STRING" id="1906.SFRA_32965"/>
<dbReference type="eggNOG" id="COG0499">
    <property type="taxonomic scope" value="Bacteria"/>
</dbReference>
<dbReference type="UniPathway" id="UPA00314">
    <property type="reaction ID" value="UER00076"/>
</dbReference>
<dbReference type="GO" id="GO:0005829">
    <property type="term" value="C:cytosol"/>
    <property type="evidence" value="ECO:0007669"/>
    <property type="project" value="TreeGrafter"/>
</dbReference>
<dbReference type="GO" id="GO:0004013">
    <property type="term" value="F:adenosylhomocysteinase activity"/>
    <property type="evidence" value="ECO:0007669"/>
    <property type="project" value="RHEA"/>
</dbReference>
<dbReference type="GO" id="GO:0006730">
    <property type="term" value="P:one-carbon metabolic process"/>
    <property type="evidence" value="ECO:0007669"/>
    <property type="project" value="UniProtKB-KW"/>
</dbReference>
<dbReference type="GO" id="GO:0033353">
    <property type="term" value="P:S-adenosylmethionine cycle"/>
    <property type="evidence" value="ECO:0007669"/>
    <property type="project" value="TreeGrafter"/>
</dbReference>
<dbReference type="Gene3D" id="3.40.50.1480">
    <property type="entry name" value="Adenosylhomocysteinase-like"/>
    <property type="match status" value="1"/>
</dbReference>
<dbReference type="Gene3D" id="3.40.50.720">
    <property type="entry name" value="NAD(P)-binding Rossmann-like Domain"/>
    <property type="match status" value="1"/>
</dbReference>
<dbReference type="InterPro" id="IPR042172">
    <property type="entry name" value="Adenosylhomocyst_ase-like_sf"/>
</dbReference>
<dbReference type="InterPro" id="IPR000043">
    <property type="entry name" value="Adenosylhomocysteinase-like"/>
</dbReference>
<dbReference type="InterPro" id="IPR015878">
    <property type="entry name" value="Ado_hCys_hydrolase_NAD-bd"/>
</dbReference>
<dbReference type="InterPro" id="IPR036291">
    <property type="entry name" value="NAD(P)-bd_dom_sf"/>
</dbReference>
<dbReference type="PANTHER" id="PTHR23420">
    <property type="entry name" value="ADENOSYLHOMOCYSTEINASE"/>
    <property type="match status" value="1"/>
</dbReference>
<dbReference type="PANTHER" id="PTHR23420:SF0">
    <property type="entry name" value="ADENOSYLHOMOCYSTEINASE"/>
    <property type="match status" value="1"/>
</dbReference>
<dbReference type="Pfam" id="PF05221">
    <property type="entry name" value="AdoHcyase"/>
    <property type="match status" value="1"/>
</dbReference>
<dbReference type="Pfam" id="PF00670">
    <property type="entry name" value="AdoHcyase_NAD"/>
    <property type="match status" value="1"/>
</dbReference>
<dbReference type="SUPFAM" id="SSF52283">
    <property type="entry name" value="Formate/glycerate dehydrogenase catalytic domain-like"/>
    <property type="match status" value="1"/>
</dbReference>
<dbReference type="SUPFAM" id="SSF51735">
    <property type="entry name" value="NAD(P)-binding Rossmann-fold domains"/>
    <property type="match status" value="1"/>
</dbReference>
<gene>
    <name type="primary">ahcY</name>
</gene>
<proteinExistence type="inferred from homology"/>
<evidence type="ECO:0000250" key="1"/>
<evidence type="ECO:0000305" key="2"/>
<reference key="1">
    <citation type="journal article" date="1992" name="Nucleic Acids Res.">
        <title>Heterologous activation of the actinorhodin biosynthetic pathway in Streptomyces lividans.</title>
        <authorList>
            <person name="Romero N.M."/>
            <person name="Parro V."/>
            <person name="Malpartida F."/>
            <person name="Mellado R.P."/>
        </authorList>
    </citation>
    <scope>NUCLEOTIDE SEQUENCE [GENOMIC DNA]</scope>
    <source>
        <strain>ATCC 14544 / DSM 40758 / IMRU 3739 / NCIMB 11726 / NRRL B-2841</strain>
    </source>
</reference>
<accession>P26799</accession>
<name>SAHH_STRFR</name>
<organism>
    <name type="scientific">Streptomyces fradiae</name>
    <name type="common">Streptomyces roseoflavus</name>
    <dbReference type="NCBI Taxonomy" id="1906"/>
    <lineage>
        <taxon>Bacteria</taxon>
        <taxon>Bacillati</taxon>
        <taxon>Actinomycetota</taxon>
        <taxon>Actinomycetes</taxon>
        <taxon>Kitasatosporales</taxon>
        <taxon>Streptomycetaceae</taxon>
        <taxon>Streptomyces</taxon>
    </lineage>
</organism>
<sequence length="120" mass="13559">IPGIVKDEVKPQVHTWTFADGKKIIVLSEGRLLNLGNATGHPSFVMSNSFADQTLAQIELYTKPEQYPTDVYVLPKHLDEKVARLHLDALGVKLTTLRPEQAEYIGVEVEGPYKPDHYRY</sequence>
<comment type="function">
    <text evidence="1">May play a key role in the regulation of the intracellular concentration of adenosylhomocysteine.</text>
</comment>
<comment type="catalytic activity">
    <reaction>
        <text>S-adenosyl-L-homocysteine + H2O = L-homocysteine + adenosine</text>
        <dbReference type="Rhea" id="RHEA:21708"/>
        <dbReference type="ChEBI" id="CHEBI:15377"/>
        <dbReference type="ChEBI" id="CHEBI:16335"/>
        <dbReference type="ChEBI" id="CHEBI:57856"/>
        <dbReference type="ChEBI" id="CHEBI:58199"/>
        <dbReference type="EC" id="3.13.2.1"/>
    </reaction>
</comment>
<comment type="cofactor">
    <cofactor evidence="1">
        <name>NAD(+)</name>
        <dbReference type="ChEBI" id="CHEBI:57540"/>
    </cofactor>
    <text evidence="1">Binds 1 NAD(+) per subunit.</text>
</comment>
<comment type="pathway">
    <text>Amino-acid biosynthesis; L-homocysteine biosynthesis; L-homocysteine from S-adenosyl-L-homocysteine: step 1/1.</text>
</comment>
<comment type="subcellular location">
    <subcellularLocation>
        <location evidence="1">Cytoplasm</location>
    </subcellularLocation>
</comment>
<comment type="similarity">
    <text evidence="2">Belongs to the adenosylhomocysteinase family.</text>
</comment>
<protein>
    <recommendedName>
        <fullName>Adenosylhomocysteinase</fullName>
        <ecNumber>3.13.2.1</ecNumber>
    </recommendedName>
    <alternativeName>
        <fullName>S-adenosyl-L-homocysteine hydrolase</fullName>
        <shortName>AdoHcyase</shortName>
    </alternativeName>
</protein>
<keyword id="KW-0963">Cytoplasm</keyword>
<keyword id="KW-0378">Hydrolase</keyword>
<keyword id="KW-0520">NAD</keyword>
<keyword id="KW-0554">One-carbon metabolism</keyword>
<feature type="chain" id="PRO_0000116991" description="Adenosylhomocysteinase">
    <location>
        <begin position="1" status="less than"/>
        <end position="120"/>
    </location>
</feature>
<feature type="binding site" evidence="1">
    <location>
        <position position="34"/>
    </location>
    <ligand>
        <name>NAD(+)</name>
        <dbReference type="ChEBI" id="CHEBI:57540"/>
    </ligand>
</feature>
<feature type="non-terminal residue">
    <location>
        <position position="1"/>
    </location>
</feature>